<protein>
    <recommendedName>
        <fullName evidence="1">Pimeloyl-[acyl-carrier protein] methyl ester esterase</fullName>
        <ecNumber evidence="1">3.1.1.85</ecNumber>
    </recommendedName>
    <alternativeName>
        <fullName evidence="1">Biotin synthesis protein BioH</fullName>
    </alternativeName>
    <alternativeName>
        <fullName evidence="1">Carboxylesterase BioH</fullName>
    </alternativeName>
</protein>
<feature type="chain" id="PRO_0000204481" description="Pimeloyl-[acyl-carrier protein] methyl ester esterase">
    <location>
        <begin position="1"/>
        <end position="254"/>
    </location>
</feature>
<feature type="active site" description="Nucleophile" evidence="1">
    <location>
        <position position="80"/>
    </location>
</feature>
<feature type="active site" evidence="1">
    <location>
        <position position="205"/>
    </location>
</feature>
<feature type="active site" evidence="1">
    <location>
        <position position="233"/>
    </location>
</feature>
<feature type="binding site" evidence="1">
    <location>
        <position position="20"/>
    </location>
    <ligand>
        <name>substrate</name>
    </ligand>
</feature>
<feature type="binding site" evidence="1">
    <location>
        <begin position="80"/>
        <end position="81"/>
    </location>
    <ligand>
        <name>substrate</name>
    </ligand>
</feature>
<feature type="binding site" evidence="1">
    <location>
        <begin position="141"/>
        <end position="145"/>
    </location>
    <ligand>
        <name>substrate</name>
    </ligand>
</feature>
<feature type="binding site" evidence="1">
    <location>
        <position position="233"/>
    </location>
    <ligand>
        <name>substrate</name>
    </ligand>
</feature>
<name>BIOH_METCA</name>
<gene>
    <name evidence="1" type="primary">bioH</name>
    <name type="ordered locus">MCA1127</name>
</gene>
<organism>
    <name type="scientific">Methylococcus capsulatus (strain ATCC 33009 / NCIMB 11132 / Bath)</name>
    <dbReference type="NCBI Taxonomy" id="243233"/>
    <lineage>
        <taxon>Bacteria</taxon>
        <taxon>Pseudomonadati</taxon>
        <taxon>Pseudomonadota</taxon>
        <taxon>Gammaproteobacteria</taxon>
        <taxon>Methylococcales</taxon>
        <taxon>Methylococcaceae</taxon>
        <taxon>Methylococcus</taxon>
    </lineage>
</organism>
<accession>Q609V0</accession>
<dbReference type="EC" id="3.1.1.85" evidence="1"/>
<dbReference type="EMBL" id="AE017282">
    <property type="protein sequence ID" value="AAU92555.1"/>
    <property type="molecule type" value="Genomic_DNA"/>
</dbReference>
<dbReference type="RefSeq" id="WP_010960421.1">
    <property type="nucleotide sequence ID" value="NC_002977.6"/>
</dbReference>
<dbReference type="SMR" id="Q609V0"/>
<dbReference type="STRING" id="243233.MCA1127"/>
<dbReference type="ESTHER" id="metca-q609v0">
    <property type="family name" value="BioH"/>
</dbReference>
<dbReference type="GeneID" id="88223420"/>
<dbReference type="KEGG" id="mca:MCA1127"/>
<dbReference type="eggNOG" id="COG0596">
    <property type="taxonomic scope" value="Bacteria"/>
</dbReference>
<dbReference type="HOGENOM" id="CLU_020336_12_2_6"/>
<dbReference type="UniPathway" id="UPA00078"/>
<dbReference type="Proteomes" id="UP000006821">
    <property type="component" value="Chromosome"/>
</dbReference>
<dbReference type="GO" id="GO:0005737">
    <property type="term" value="C:cytoplasm"/>
    <property type="evidence" value="ECO:0007669"/>
    <property type="project" value="UniProtKB-SubCell"/>
</dbReference>
<dbReference type="GO" id="GO:0016020">
    <property type="term" value="C:membrane"/>
    <property type="evidence" value="ECO:0007669"/>
    <property type="project" value="TreeGrafter"/>
</dbReference>
<dbReference type="GO" id="GO:0090499">
    <property type="term" value="F:pimelyl-[acyl-carrier protein] methyl ester esterase activity"/>
    <property type="evidence" value="ECO:0007669"/>
    <property type="project" value="UniProtKB-EC"/>
</dbReference>
<dbReference type="GO" id="GO:0009102">
    <property type="term" value="P:biotin biosynthetic process"/>
    <property type="evidence" value="ECO:0007669"/>
    <property type="project" value="UniProtKB-UniRule"/>
</dbReference>
<dbReference type="Gene3D" id="3.40.50.1820">
    <property type="entry name" value="alpha/beta hydrolase"/>
    <property type="match status" value="1"/>
</dbReference>
<dbReference type="HAMAP" id="MF_01260">
    <property type="entry name" value="Carboxylester"/>
    <property type="match status" value="1"/>
</dbReference>
<dbReference type="InterPro" id="IPR000073">
    <property type="entry name" value="AB_hydrolase_1"/>
</dbReference>
<dbReference type="InterPro" id="IPR029058">
    <property type="entry name" value="AB_hydrolase_fold"/>
</dbReference>
<dbReference type="InterPro" id="IPR050266">
    <property type="entry name" value="AB_hydrolase_sf"/>
</dbReference>
<dbReference type="InterPro" id="IPR010076">
    <property type="entry name" value="BioH"/>
</dbReference>
<dbReference type="NCBIfam" id="TIGR01738">
    <property type="entry name" value="bioH"/>
    <property type="match status" value="1"/>
</dbReference>
<dbReference type="PANTHER" id="PTHR43798:SF31">
    <property type="entry name" value="AB HYDROLASE SUPERFAMILY PROTEIN YCLE"/>
    <property type="match status" value="1"/>
</dbReference>
<dbReference type="PANTHER" id="PTHR43798">
    <property type="entry name" value="MONOACYLGLYCEROL LIPASE"/>
    <property type="match status" value="1"/>
</dbReference>
<dbReference type="Pfam" id="PF12697">
    <property type="entry name" value="Abhydrolase_6"/>
    <property type="match status" value="1"/>
</dbReference>
<dbReference type="SUPFAM" id="SSF53474">
    <property type="entry name" value="alpha/beta-Hydrolases"/>
    <property type="match status" value="1"/>
</dbReference>
<comment type="function">
    <text evidence="1">The physiological role of BioH is to remove the methyl group introduced by BioC when the pimeloyl moiety is complete. It allows to synthesize pimeloyl-ACP via the fatty acid synthetic pathway through the hydrolysis of the ester bonds of pimeloyl-ACP esters.</text>
</comment>
<comment type="catalytic activity">
    <reaction evidence="1">
        <text>6-carboxyhexanoyl-[ACP] methyl ester + H2O = 6-carboxyhexanoyl-[ACP] + methanol + H(+)</text>
        <dbReference type="Rhea" id="RHEA:42700"/>
        <dbReference type="Rhea" id="RHEA-COMP:9955"/>
        <dbReference type="Rhea" id="RHEA-COMP:10186"/>
        <dbReference type="ChEBI" id="CHEBI:15377"/>
        <dbReference type="ChEBI" id="CHEBI:15378"/>
        <dbReference type="ChEBI" id="CHEBI:17790"/>
        <dbReference type="ChEBI" id="CHEBI:78846"/>
        <dbReference type="ChEBI" id="CHEBI:82735"/>
        <dbReference type="EC" id="3.1.1.85"/>
    </reaction>
</comment>
<comment type="pathway">
    <text evidence="1">Cofactor biosynthesis; biotin biosynthesis.</text>
</comment>
<comment type="subunit">
    <text evidence="1">Monomer.</text>
</comment>
<comment type="subcellular location">
    <subcellularLocation>
        <location evidence="1">Cytoplasm</location>
    </subcellularLocation>
</comment>
<comment type="similarity">
    <text evidence="1">Belongs to the AB hydrolase superfamily. Carboxylesterase BioH family.</text>
</comment>
<keyword id="KW-0093">Biotin biosynthesis</keyword>
<keyword id="KW-0963">Cytoplasm</keyword>
<keyword id="KW-0378">Hydrolase</keyword>
<keyword id="KW-1185">Reference proteome</keyword>
<keyword id="KW-0719">Serine esterase</keyword>
<reference key="1">
    <citation type="journal article" date="2004" name="PLoS Biol.">
        <title>Genomic insights into methanotrophy: the complete genome sequence of Methylococcus capsulatus (Bath).</title>
        <authorList>
            <person name="Ward N.L."/>
            <person name="Larsen O."/>
            <person name="Sakwa J."/>
            <person name="Bruseth L."/>
            <person name="Khouri H.M."/>
            <person name="Durkin A.S."/>
            <person name="Dimitrov G."/>
            <person name="Jiang L."/>
            <person name="Scanlan D."/>
            <person name="Kang K.H."/>
            <person name="Lewis M.R."/>
            <person name="Nelson K.E."/>
            <person name="Methe B.A."/>
            <person name="Wu M."/>
            <person name="Heidelberg J.F."/>
            <person name="Paulsen I.T."/>
            <person name="Fouts D.E."/>
            <person name="Ravel J."/>
            <person name="Tettelin H."/>
            <person name="Ren Q."/>
            <person name="Read T.D."/>
            <person name="DeBoy R.T."/>
            <person name="Seshadri R."/>
            <person name="Salzberg S.L."/>
            <person name="Jensen H.B."/>
            <person name="Birkeland N.K."/>
            <person name="Nelson W.C."/>
            <person name="Dodson R.J."/>
            <person name="Grindhaug S.H."/>
            <person name="Holt I.E."/>
            <person name="Eidhammer I."/>
            <person name="Jonasen I."/>
            <person name="Vanaken S."/>
            <person name="Utterback T.R."/>
            <person name="Feldblyum T.V."/>
            <person name="Fraser C.M."/>
            <person name="Lillehaug J.R."/>
            <person name="Eisen J.A."/>
        </authorList>
    </citation>
    <scope>NUCLEOTIDE SEQUENCE [LARGE SCALE GENOMIC DNA]</scope>
    <source>
        <strain>ATCC 33009 / NCIMB 11132 / Bath</strain>
    </source>
</reference>
<sequence length="254" mass="27807">MGLFIETSGRGPEVVLIHGWGMHGGIWSGFVPWLTDRFRVTRIDLPGHGHSPMLADWSLETVAGAVLEAVPRPAHWVGWSLGAMVALEAARMAPGAVASLTLLCGTPRFVAEPGWPGMEAVTLMRFADGFLSDYEDACRRFLALQAWGMPNERELLRGVRSQLSGRPPPERPALLAGLEVLRHADLRGVLRELPQPVQALLGRRDRLVPVELGDALARLKTGLVSHRIDDAPHVPFLTHGERTARLIHEFIASS</sequence>
<proteinExistence type="inferred from homology"/>
<evidence type="ECO:0000255" key="1">
    <source>
        <dbReference type="HAMAP-Rule" id="MF_01260"/>
    </source>
</evidence>